<name>DEF1_BIFLO</name>
<organism>
    <name type="scientific">Bifidobacterium longum (strain NCC 2705)</name>
    <dbReference type="NCBI Taxonomy" id="206672"/>
    <lineage>
        <taxon>Bacteria</taxon>
        <taxon>Bacillati</taxon>
        <taxon>Actinomycetota</taxon>
        <taxon>Actinomycetes</taxon>
        <taxon>Bifidobacteriales</taxon>
        <taxon>Bifidobacteriaceae</taxon>
        <taxon>Bifidobacterium</taxon>
    </lineage>
</organism>
<reference key="1">
    <citation type="journal article" date="2002" name="Proc. Natl. Acad. Sci. U.S.A.">
        <title>The genome sequence of Bifidobacterium longum reflects its adaptation to the human gastrointestinal tract.</title>
        <authorList>
            <person name="Schell M.A."/>
            <person name="Karmirantzou M."/>
            <person name="Snel B."/>
            <person name="Vilanova D."/>
            <person name="Berger B."/>
            <person name="Pessi G."/>
            <person name="Zwahlen M.-C."/>
            <person name="Desiere F."/>
            <person name="Bork P."/>
            <person name="Delley M."/>
            <person name="Pridmore R.D."/>
            <person name="Arigoni F."/>
        </authorList>
    </citation>
    <scope>NUCLEOTIDE SEQUENCE [LARGE SCALE GENOMIC DNA]</scope>
    <source>
        <strain>NCC 2705</strain>
    </source>
</reference>
<dbReference type="EC" id="3.5.1.88" evidence="1"/>
<dbReference type="EMBL" id="AE014295">
    <property type="protein sequence ID" value="AAN24991.1"/>
    <property type="molecule type" value="Genomic_DNA"/>
</dbReference>
<dbReference type="RefSeq" id="NP_696355.1">
    <property type="nucleotide sequence ID" value="NC_004307.2"/>
</dbReference>
<dbReference type="RefSeq" id="WP_007051298.1">
    <property type="nucleotide sequence ID" value="NC_004307.2"/>
</dbReference>
<dbReference type="SMR" id="Q8G534"/>
<dbReference type="STRING" id="206672.BL1186"/>
<dbReference type="EnsemblBacteria" id="AAN24991">
    <property type="protein sequence ID" value="AAN24991"/>
    <property type="gene ID" value="BL1186"/>
</dbReference>
<dbReference type="KEGG" id="blo:BL1186"/>
<dbReference type="PATRIC" id="fig|206672.9.peg.899"/>
<dbReference type="HOGENOM" id="CLU_061901_5_2_11"/>
<dbReference type="OrthoDB" id="9804313at2"/>
<dbReference type="PhylomeDB" id="Q8G534"/>
<dbReference type="Proteomes" id="UP000000439">
    <property type="component" value="Chromosome"/>
</dbReference>
<dbReference type="GO" id="GO:0046872">
    <property type="term" value="F:metal ion binding"/>
    <property type="evidence" value="ECO:0007669"/>
    <property type="project" value="UniProtKB-KW"/>
</dbReference>
<dbReference type="GO" id="GO:0042586">
    <property type="term" value="F:peptide deformylase activity"/>
    <property type="evidence" value="ECO:0007669"/>
    <property type="project" value="UniProtKB-UniRule"/>
</dbReference>
<dbReference type="GO" id="GO:0043686">
    <property type="term" value="P:co-translational protein modification"/>
    <property type="evidence" value="ECO:0007669"/>
    <property type="project" value="TreeGrafter"/>
</dbReference>
<dbReference type="GO" id="GO:0006412">
    <property type="term" value="P:translation"/>
    <property type="evidence" value="ECO:0007669"/>
    <property type="project" value="UniProtKB-UniRule"/>
</dbReference>
<dbReference type="CDD" id="cd00487">
    <property type="entry name" value="Pep_deformylase"/>
    <property type="match status" value="1"/>
</dbReference>
<dbReference type="FunFam" id="3.90.45.10:FF:000003">
    <property type="entry name" value="Peptide deformylase"/>
    <property type="match status" value="1"/>
</dbReference>
<dbReference type="Gene3D" id="3.90.45.10">
    <property type="entry name" value="Peptide deformylase"/>
    <property type="match status" value="1"/>
</dbReference>
<dbReference type="HAMAP" id="MF_00163">
    <property type="entry name" value="Pep_deformylase"/>
    <property type="match status" value="1"/>
</dbReference>
<dbReference type="InterPro" id="IPR023635">
    <property type="entry name" value="Peptide_deformylase"/>
</dbReference>
<dbReference type="InterPro" id="IPR036821">
    <property type="entry name" value="Peptide_deformylase_sf"/>
</dbReference>
<dbReference type="NCBIfam" id="NF001159">
    <property type="entry name" value="PRK00150.1-3"/>
    <property type="match status" value="1"/>
</dbReference>
<dbReference type="PANTHER" id="PTHR10458">
    <property type="entry name" value="PEPTIDE DEFORMYLASE"/>
    <property type="match status" value="1"/>
</dbReference>
<dbReference type="PANTHER" id="PTHR10458:SF2">
    <property type="entry name" value="PEPTIDE DEFORMYLASE, MITOCHONDRIAL"/>
    <property type="match status" value="1"/>
</dbReference>
<dbReference type="Pfam" id="PF01327">
    <property type="entry name" value="Pep_deformylase"/>
    <property type="match status" value="1"/>
</dbReference>
<dbReference type="PRINTS" id="PR01576">
    <property type="entry name" value="PDEFORMYLASE"/>
</dbReference>
<dbReference type="SUPFAM" id="SSF56420">
    <property type="entry name" value="Peptide deformylase"/>
    <property type="match status" value="1"/>
</dbReference>
<evidence type="ECO:0000255" key="1">
    <source>
        <dbReference type="HAMAP-Rule" id="MF_00163"/>
    </source>
</evidence>
<keyword id="KW-0378">Hydrolase</keyword>
<keyword id="KW-0408">Iron</keyword>
<keyword id="KW-0479">Metal-binding</keyword>
<keyword id="KW-0648">Protein biosynthesis</keyword>
<keyword id="KW-1185">Reference proteome</keyword>
<protein>
    <recommendedName>
        <fullName evidence="1">Peptide deformylase 1</fullName>
        <shortName evidence="1">PDF 1</shortName>
        <ecNumber evidence="1">3.5.1.88</ecNumber>
    </recommendedName>
    <alternativeName>
        <fullName evidence="1">Polypeptide deformylase 1</fullName>
    </alternativeName>
</protein>
<sequence length="217" mass="24443">MFGKNAKVDLELNRDVEQLIKTGGKEKLLPIVQAGEPVLRQRTVAYNGQLSKRTLAKLIDTMHTTMLEAPGVGLAATQIGLGLALAVVEDHVRDDEDDPREIAEFPFHVIINPSYKPTSDKTASFYEGCLSFDGYQAVRKRWLDITAEWDDEDGKHHSEPLHGWPARIFQHETDHLSGELYIDRAEIRSLTTNENLEDYWCEDPVPTEAAEELGFAL</sequence>
<feature type="chain" id="PRO_0000082742" description="Peptide deformylase 1">
    <location>
        <begin position="1"/>
        <end position="217"/>
    </location>
</feature>
<feature type="active site" evidence="1">
    <location>
        <position position="172"/>
    </location>
</feature>
<feature type="binding site" evidence="1">
    <location>
        <position position="129"/>
    </location>
    <ligand>
        <name>Fe cation</name>
        <dbReference type="ChEBI" id="CHEBI:24875"/>
    </ligand>
</feature>
<feature type="binding site" evidence="1">
    <location>
        <position position="171"/>
    </location>
    <ligand>
        <name>Fe cation</name>
        <dbReference type="ChEBI" id="CHEBI:24875"/>
    </ligand>
</feature>
<feature type="binding site" evidence="1">
    <location>
        <position position="175"/>
    </location>
    <ligand>
        <name>Fe cation</name>
        <dbReference type="ChEBI" id="CHEBI:24875"/>
    </ligand>
</feature>
<comment type="function">
    <text evidence="1">Removes the formyl group from the N-terminal Met of newly synthesized proteins. Requires at least a dipeptide for an efficient rate of reaction. N-terminal L-methionine is a prerequisite for activity but the enzyme has broad specificity at other positions.</text>
</comment>
<comment type="catalytic activity">
    <reaction evidence="1">
        <text>N-terminal N-formyl-L-methionyl-[peptide] + H2O = N-terminal L-methionyl-[peptide] + formate</text>
        <dbReference type="Rhea" id="RHEA:24420"/>
        <dbReference type="Rhea" id="RHEA-COMP:10639"/>
        <dbReference type="Rhea" id="RHEA-COMP:10640"/>
        <dbReference type="ChEBI" id="CHEBI:15377"/>
        <dbReference type="ChEBI" id="CHEBI:15740"/>
        <dbReference type="ChEBI" id="CHEBI:49298"/>
        <dbReference type="ChEBI" id="CHEBI:64731"/>
        <dbReference type="EC" id="3.5.1.88"/>
    </reaction>
</comment>
<comment type="cofactor">
    <cofactor evidence="1">
        <name>Fe(2+)</name>
        <dbReference type="ChEBI" id="CHEBI:29033"/>
    </cofactor>
    <text evidence="1">Binds 1 Fe(2+) ion.</text>
</comment>
<comment type="similarity">
    <text evidence="1">Belongs to the polypeptide deformylase family.</text>
</comment>
<gene>
    <name evidence="1" type="primary">def1</name>
    <name type="ordered locus">BL1186</name>
</gene>
<proteinExistence type="inferred from homology"/>
<accession>Q8G534</accession>